<reference key="1">
    <citation type="submission" date="2008-01" db="EMBL/GenBank/DDBJ databases">
        <title>Complete sequence of chromosome of Caulobacter sp. K31.</title>
        <authorList>
            <consortium name="US DOE Joint Genome Institute"/>
            <person name="Copeland A."/>
            <person name="Lucas S."/>
            <person name="Lapidus A."/>
            <person name="Barry K."/>
            <person name="Glavina del Rio T."/>
            <person name="Dalin E."/>
            <person name="Tice H."/>
            <person name="Pitluck S."/>
            <person name="Bruce D."/>
            <person name="Goodwin L."/>
            <person name="Thompson L.S."/>
            <person name="Brettin T."/>
            <person name="Detter J.C."/>
            <person name="Han C."/>
            <person name="Schmutz J."/>
            <person name="Larimer F."/>
            <person name="Land M."/>
            <person name="Hauser L."/>
            <person name="Kyrpides N."/>
            <person name="Kim E."/>
            <person name="Stephens C."/>
            <person name="Richardson P."/>
        </authorList>
    </citation>
    <scope>NUCLEOTIDE SEQUENCE [LARGE SCALE GENOMIC DNA]</scope>
    <source>
        <strain>K31</strain>
    </source>
</reference>
<name>HIS6_CAUSK</name>
<keyword id="KW-0028">Amino-acid biosynthesis</keyword>
<keyword id="KW-0963">Cytoplasm</keyword>
<keyword id="KW-0368">Histidine biosynthesis</keyword>
<keyword id="KW-0456">Lyase</keyword>
<dbReference type="EC" id="4.3.2.10" evidence="1"/>
<dbReference type="EMBL" id="CP000927">
    <property type="protein sequence ID" value="ABZ74162.1"/>
    <property type="molecule type" value="Genomic_DNA"/>
</dbReference>
<dbReference type="SMR" id="B0T798"/>
<dbReference type="STRING" id="366602.Caul_5042"/>
<dbReference type="KEGG" id="cak:Caul_5042"/>
<dbReference type="eggNOG" id="COG0107">
    <property type="taxonomic scope" value="Bacteria"/>
</dbReference>
<dbReference type="HOGENOM" id="CLU_048577_4_0_5"/>
<dbReference type="OrthoDB" id="9781903at2"/>
<dbReference type="UniPathway" id="UPA00031">
    <property type="reaction ID" value="UER00010"/>
</dbReference>
<dbReference type="GO" id="GO:0005737">
    <property type="term" value="C:cytoplasm"/>
    <property type="evidence" value="ECO:0007669"/>
    <property type="project" value="UniProtKB-SubCell"/>
</dbReference>
<dbReference type="GO" id="GO:0000107">
    <property type="term" value="F:imidazoleglycerol-phosphate synthase activity"/>
    <property type="evidence" value="ECO:0007669"/>
    <property type="project" value="UniProtKB-UniRule"/>
</dbReference>
<dbReference type="GO" id="GO:0016829">
    <property type="term" value="F:lyase activity"/>
    <property type="evidence" value="ECO:0007669"/>
    <property type="project" value="UniProtKB-KW"/>
</dbReference>
<dbReference type="GO" id="GO:0000105">
    <property type="term" value="P:L-histidine biosynthetic process"/>
    <property type="evidence" value="ECO:0007669"/>
    <property type="project" value="UniProtKB-UniRule"/>
</dbReference>
<dbReference type="CDD" id="cd04731">
    <property type="entry name" value="HisF"/>
    <property type="match status" value="1"/>
</dbReference>
<dbReference type="FunFam" id="3.20.20.70:FF:000006">
    <property type="entry name" value="Imidazole glycerol phosphate synthase subunit HisF"/>
    <property type="match status" value="1"/>
</dbReference>
<dbReference type="Gene3D" id="3.20.20.70">
    <property type="entry name" value="Aldolase class I"/>
    <property type="match status" value="1"/>
</dbReference>
<dbReference type="HAMAP" id="MF_01013">
    <property type="entry name" value="HisF"/>
    <property type="match status" value="1"/>
</dbReference>
<dbReference type="InterPro" id="IPR013785">
    <property type="entry name" value="Aldolase_TIM"/>
</dbReference>
<dbReference type="InterPro" id="IPR006062">
    <property type="entry name" value="His_biosynth"/>
</dbReference>
<dbReference type="InterPro" id="IPR004651">
    <property type="entry name" value="HisF"/>
</dbReference>
<dbReference type="InterPro" id="IPR050064">
    <property type="entry name" value="IGPS_HisA/HisF"/>
</dbReference>
<dbReference type="InterPro" id="IPR011060">
    <property type="entry name" value="RibuloseP-bd_barrel"/>
</dbReference>
<dbReference type="NCBIfam" id="TIGR00735">
    <property type="entry name" value="hisF"/>
    <property type="match status" value="1"/>
</dbReference>
<dbReference type="PANTHER" id="PTHR21235:SF2">
    <property type="entry name" value="IMIDAZOLE GLYCEROL PHOSPHATE SYNTHASE HISHF"/>
    <property type="match status" value="1"/>
</dbReference>
<dbReference type="PANTHER" id="PTHR21235">
    <property type="entry name" value="IMIDAZOLE GLYCEROL PHOSPHATE SYNTHASE SUBUNIT HISF/H IGP SYNTHASE SUBUNIT HISF/H"/>
    <property type="match status" value="1"/>
</dbReference>
<dbReference type="Pfam" id="PF00977">
    <property type="entry name" value="His_biosynth"/>
    <property type="match status" value="1"/>
</dbReference>
<dbReference type="SUPFAM" id="SSF51366">
    <property type="entry name" value="Ribulose-phoshate binding barrel"/>
    <property type="match status" value="1"/>
</dbReference>
<organism>
    <name type="scientific">Caulobacter sp. (strain K31)</name>
    <dbReference type="NCBI Taxonomy" id="366602"/>
    <lineage>
        <taxon>Bacteria</taxon>
        <taxon>Pseudomonadati</taxon>
        <taxon>Pseudomonadota</taxon>
        <taxon>Alphaproteobacteria</taxon>
        <taxon>Caulobacterales</taxon>
        <taxon>Caulobacteraceae</taxon>
        <taxon>Caulobacter</taxon>
    </lineage>
</organism>
<sequence>MLKTRIIPCLDVKDGRVVKGVNFVALRDAGDPVEQARAYDAAGADELMFLDITASSDNRGLLLDVISRTAEVCFMPVSVGGGVRQVSDMRRLLLAGADKVSVNTAAVENPDLVAAGADAFGAQCVVVAIDAKARGDGSGWNVWTYGGRKDTGIDVVDWAAKVVERGAGEILLTSMDRDGAKIGYDIPLLKAVTGAVTVPVIASGGAGTTDHLVEAARDGHAAAVLAASIFHFGEISIGQAKRAMADAGIPVRLDTLKGAA</sequence>
<feature type="chain" id="PRO_1000084052" description="Imidazole glycerol phosphate synthase subunit HisF">
    <location>
        <begin position="1"/>
        <end position="260"/>
    </location>
</feature>
<feature type="active site" evidence="1">
    <location>
        <position position="11"/>
    </location>
</feature>
<feature type="active site" evidence="1">
    <location>
        <position position="130"/>
    </location>
</feature>
<evidence type="ECO:0000255" key="1">
    <source>
        <dbReference type="HAMAP-Rule" id="MF_01013"/>
    </source>
</evidence>
<proteinExistence type="inferred from homology"/>
<accession>B0T798</accession>
<gene>
    <name evidence="1" type="primary">hisF</name>
    <name type="ordered locus">Caul_5042</name>
</gene>
<comment type="function">
    <text evidence="1">IGPS catalyzes the conversion of PRFAR and glutamine to IGP, AICAR and glutamate. The HisF subunit catalyzes the cyclization activity that produces IGP and AICAR from PRFAR using the ammonia provided by the HisH subunit.</text>
</comment>
<comment type="catalytic activity">
    <reaction evidence="1">
        <text>5-[(5-phospho-1-deoxy-D-ribulos-1-ylimino)methylamino]-1-(5-phospho-beta-D-ribosyl)imidazole-4-carboxamide + L-glutamine = D-erythro-1-(imidazol-4-yl)glycerol 3-phosphate + 5-amino-1-(5-phospho-beta-D-ribosyl)imidazole-4-carboxamide + L-glutamate + H(+)</text>
        <dbReference type="Rhea" id="RHEA:24793"/>
        <dbReference type="ChEBI" id="CHEBI:15378"/>
        <dbReference type="ChEBI" id="CHEBI:29985"/>
        <dbReference type="ChEBI" id="CHEBI:58278"/>
        <dbReference type="ChEBI" id="CHEBI:58359"/>
        <dbReference type="ChEBI" id="CHEBI:58475"/>
        <dbReference type="ChEBI" id="CHEBI:58525"/>
        <dbReference type="EC" id="4.3.2.10"/>
    </reaction>
</comment>
<comment type="pathway">
    <text evidence="1">Amino-acid biosynthesis; L-histidine biosynthesis; L-histidine from 5-phospho-alpha-D-ribose 1-diphosphate: step 5/9.</text>
</comment>
<comment type="subunit">
    <text evidence="1">Heterodimer of HisH and HisF.</text>
</comment>
<comment type="subcellular location">
    <subcellularLocation>
        <location evidence="1">Cytoplasm</location>
    </subcellularLocation>
</comment>
<comment type="similarity">
    <text evidence="1">Belongs to the HisA/HisF family.</text>
</comment>
<protein>
    <recommendedName>
        <fullName evidence="1">Imidazole glycerol phosphate synthase subunit HisF</fullName>
        <ecNumber evidence="1">4.3.2.10</ecNumber>
    </recommendedName>
    <alternativeName>
        <fullName evidence="1">IGP synthase cyclase subunit</fullName>
    </alternativeName>
    <alternativeName>
        <fullName evidence="1">IGP synthase subunit HisF</fullName>
    </alternativeName>
    <alternativeName>
        <fullName evidence="1">ImGP synthase subunit HisF</fullName>
        <shortName evidence="1">IGPS subunit HisF</shortName>
    </alternativeName>
</protein>